<name>SYQ_BRADU</name>
<evidence type="ECO:0000255" key="1">
    <source>
        <dbReference type="HAMAP-Rule" id="MF_00126"/>
    </source>
</evidence>
<sequence>MTEPVAAEVGRDFIRDIIQADLDQAKYREIVTRFPPEPNGYLHIGHAKSIALNFGIAQEFPGRCHLRFDDTNPVKEEQEYIDSIQADVHWLGFDWGKNLFFASDYFDRLYEWAETLIRDGLAYVDDQTQEEIRTSRGTLTEPGKNSPFRDRSVDENLDLFRRMKAGEFPNGARVLRAKIDMAAGNINLRDPVLYRILHAHHPRTGNAWCIYPSYDYAHGQSDAIEGITHSICTLEFEDHRPLYDWFIEKLPVPSKPHQYEFARLNLTYTLLSKRVLTQLVREGHVAGWDDPRMPTMAGMRRRGVPPAALREFVKRIGVAKANSVVDVGMLEFCIREELNRTAQRRMAVLKPLKVVIENYPEGQTEELEAINHPDDPSAGTRKITFGRELYIEQDDFMENPPKKFFRLSPGNEVRLRYAYFVKCTGVIKNESGEVVELRCTYDPATRGGNAPDGRKVKATMHWLSAAASKPAEIRIYNQLFANPSPDASNFAADLNPQSLEILSNARVEASVAESNSTEPMQFERQGYFVRDKDSTPGKPVFSRTIGLRDTFAKEVAKG</sequence>
<dbReference type="EC" id="6.1.1.18" evidence="1"/>
<dbReference type="EMBL" id="BA000040">
    <property type="protein sequence ID" value="BAC50102.1"/>
    <property type="molecule type" value="Genomic_DNA"/>
</dbReference>
<dbReference type="RefSeq" id="NP_771477.1">
    <property type="nucleotide sequence ID" value="NC_004463.1"/>
</dbReference>
<dbReference type="RefSeq" id="WP_011087605.1">
    <property type="nucleotide sequence ID" value="NC_004463.1"/>
</dbReference>
<dbReference type="SMR" id="Q89KR6"/>
<dbReference type="FunCoup" id="Q89KR6">
    <property type="interactions" value="586"/>
</dbReference>
<dbReference type="STRING" id="224911.AAV28_21495"/>
<dbReference type="EnsemblBacteria" id="BAC50102">
    <property type="protein sequence ID" value="BAC50102"/>
    <property type="gene ID" value="BAC50102"/>
</dbReference>
<dbReference type="GeneID" id="46491840"/>
<dbReference type="KEGG" id="bja:bll4837"/>
<dbReference type="PATRIC" id="fig|224911.44.peg.4682"/>
<dbReference type="eggNOG" id="COG0008">
    <property type="taxonomic scope" value="Bacteria"/>
</dbReference>
<dbReference type="HOGENOM" id="CLU_001882_2_3_5"/>
<dbReference type="InParanoid" id="Q89KR6"/>
<dbReference type="OrthoDB" id="9807503at2"/>
<dbReference type="PhylomeDB" id="Q89KR6"/>
<dbReference type="Proteomes" id="UP000002526">
    <property type="component" value="Chromosome"/>
</dbReference>
<dbReference type="GO" id="GO:0005829">
    <property type="term" value="C:cytosol"/>
    <property type="evidence" value="ECO:0000318"/>
    <property type="project" value="GO_Central"/>
</dbReference>
<dbReference type="GO" id="GO:0005524">
    <property type="term" value="F:ATP binding"/>
    <property type="evidence" value="ECO:0007669"/>
    <property type="project" value="UniProtKB-UniRule"/>
</dbReference>
<dbReference type="GO" id="GO:0004819">
    <property type="term" value="F:glutamine-tRNA ligase activity"/>
    <property type="evidence" value="ECO:0000318"/>
    <property type="project" value="GO_Central"/>
</dbReference>
<dbReference type="GO" id="GO:0006425">
    <property type="term" value="P:glutaminyl-tRNA aminoacylation"/>
    <property type="evidence" value="ECO:0000318"/>
    <property type="project" value="GO_Central"/>
</dbReference>
<dbReference type="GO" id="GO:0006424">
    <property type="term" value="P:glutamyl-tRNA aminoacylation"/>
    <property type="evidence" value="ECO:0007669"/>
    <property type="project" value="UniProtKB-UniRule"/>
</dbReference>
<dbReference type="CDD" id="cd00807">
    <property type="entry name" value="GlnRS_core"/>
    <property type="match status" value="1"/>
</dbReference>
<dbReference type="FunFam" id="1.10.1160.10:FF:000001">
    <property type="entry name" value="Glutamine--tRNA ligase"/>
    <property type="match status" value="1"/>
</dbReference>
<dbReference type="FunFam" id="2.40.240.10:FF:000001">
    <property type="entry name" value="Glutamine--tRNA ligase"/>
    <property type="match status" value="1"/>
</dbReference>
<dbReference type="FunFam" id="3.90.800.10:FF:000001">
    <property type="entry name" value="Glutamine--tRNA ligase"/>
    <property type="match status" value="1"/>
</dbReference>
<dbReference type="FunFam" id="3.40.50.620:FF:000037">
    <property type="entry name" value="Glutamine--tRNA ligase cytoplasmic"/>
    <property type="match status" value="1"/>
</dbReference>
<dbReference type="Gene3D" id="1.10.1160.10">
    <property type="entry name" value="Glutamyl-trna Synthetase, Domain 2"/>
    <property type="match status" value="1"/>
</dbReference>
<dbReference type="Gene3D" id="3.90.800.10">
    <property type="entry name" value="Glutamyl-tRNA Synthetase, Domain 3"/>
    <property type="match status" value="1"/>
</dbReference>
<dbReference type="Gene3D" id="3.40.50.620">
    <property type="entry name" value="HUPs"/>
    <property type="match status" value="1"/>
</dbReference>
<dbReference type="Gene3D" id="2.40.240.10">
    <property type="entry name" value="Ribosomal Protein L25, Chain P"/>
    <property type="match status" value="2"/>
</dbReference>
<dbReference type="HAMAP" id="MF_00126">
    <property type="entry name" value="Gln_tRNA_synth"/>
    <property type="match status" value="1"/>
</dbReference>
<dbReference type="InterPro" id="IPR001412">
    <property type="entry name" value="aa-tRNA-synth_I_CS"/>
</dbReference>
<dbReference type="InterPro" id="IPR004514">
    <property type="entry name" value="Gln-tRNA-synth"/>
</dbReference>
<dbReference type="InterPro" id="IPR050132">
    <property type="entry name" value="Gln/Glu-tRNA_Ligase"/>
</dbReference>
<dbReference type="InterPro" id="IPR022861">
    <property type="entry name" value="Gln_tRNA_ligase_bac"/>
</dbReference>
<dbReference type="InterPro" id="IPR000924">
    <property type="entry name" value="Glu/Gln-tRNA-synth"/>
</dbReference>
<dbReference type="InterPro" id="IPR020058">
    <property type="entry name" value="Glu/Gln-tRNA-synth_Ib_cat-dom"/>
</dbReference>
<dbReference type="InterPro" id="IPR020059">
    <property type="entry name" value="Glu/Gln-tRNA-synth_Ib_codon-bd"/>
</dbReference>
<dbReference type="InterPro" id="IPR020061">
    <property type="entry name" value="Glu_tRNA_lig_a-bdl"/>
</dbReference>
<dbReference type="InterPro" id="IPR020056">
    <property type="entry name" value="Rbsml_bL25/Gln-tRNA_synth_N"/>
</dbReference>
<dbReference type="InterPro" id="IPR011035">
    <property type="entry name" value="Ribosomal_bL25/Gln-tRNA_synth"/>
</dbReference>
<dbReference type="InterPro" id="IPR014729">
    <property type="entry name" value="Rossmann-like_a/b/a_fold"/>
</dbReference>
<dbReference type="InterPro" id="IPR049437">
    <property type="entry name" value="tRNA-synt_1c_C2"/>
</dbReference>
<dbReference type="NCBIfam" id="TIGR00440">
    <property type="entry name" value="glnS"/>
    <property type="match status" value="1"/>
</dbReference>
<dbReference type="NCBIfam" id="NF011291">
    <property type="entry name" value="PRK14703.1"/>
    <property type="match status" value="1"/>
</dbReference>
<dbReference type="PANTHER" id="PTHR43097:SF5">
    <property type="entry name" value="GLUTAMATE--TRNA LIGASE"/>
    <property type="match status" value="1"/>
</dbReference>
<dbReference type="PANTHER" id="PTHR43097">
    <property type="entry name" value="GLUTAMINE-TRNA LIGASE"/>
    <property type="match status" value="1"/>
</dbReference>
<dbReference type="Pfam" id="PF00749">
    <property type="entry name" value="tRNA-synt_1c"/>
    <property type="match status" value="1"/>
</dbReference>
<dbReference type="Pfam" id="PF03950">
    <property type="entry name" value="tRNA-synt_1c_C"/>
    <property type="match status" value="1"/>
</dbReference>
<dbReference type="Pfam" id="PF20974">
    <property type="entry name" value="tRNA-synt_1c_C2"/>
    <property type="match status" value="1"/>
</dbReference>
<dbReference type="PRINTS" id="PR00987">
    <property type="entry name" value="TRNASYNTHGLU"/>
</dbReference>
<dbReference type="SUPFAM" id="SSF52374">
    <property type="entry name" value="Nucleotidylyl transferase"/>
    <property type="match status" value="1"/>
</dbReference>
<dbReference type="SUPFAM" id="SSF50715">
    <property type="entry name" value="Ribosomal protein L25-like"/>
    <property type="match status" value="1"/>
</dbReference>
<dbReference type="PROSITE" id="PS00178">
    <property type="entry name" value="AA_TRNA_LIGASE_I"/>
    <property type="match status" value="1"/>
</dbReference>
<gene>
    <name evidence="1" type="primary">glnS</name>
    <name type="ordered locus">bll4837</name>
</gene>
<proteinExistence type="inferred from homology"/>
<protein>
    <recommendedName>
        <fullName evidence="1">Glutamine--tRNA ligase</fullName>
        <ecNumber evidence="1">6.1.1.18</ecNumber>
    </recommendedName>
    <alternativeName>
        <fullName evidence="1">Glutaminyl-tRNA synthetase</fullName>
        <shortName evidence="1">GlnRS</shortName>
    </alternativeName>
</protein>
<accession>Q89KR6</accession>
<feature type="chain" id="PRO_0000195826" description="Glutamine--tRNA ligase">
    <location>
        <begin position="1"/>
        <end position="558"/>
    </location>
</feature>
<feature type="short sequence motif" description="'HIGH' region" evidence="1">
    <location>
        <begin position="36"/>
        <end position="46"/>
    </location>
</feature>
<feature type="short sequence motif" description="'KMSKS' region" evidence="1">
    <location>
        <begin position="270"/>
        <end position="274"/>
    </location>
</feature>
<feature type="binding site" evidence="1">
    <location>
        <begin position="37"/>
        <end position="39"/>
    </location>
    <ligand>
        <name>ATP</name>
        <dbReference type="ChEBI" id="CHEBI:30616"/>
    </ligand>
</feature>
<feature type="binding site" evidence="1">
    <location>
        <begin position="43"/>
        <end position="49"/>
    </location>
    <ligand>
        <name>ATP</name>
        <dbReference type="ChEBI" id="CHEBI:30616"/>
    </ligand>
</feature>
<feature type="binding site" evidence="1">
    <location>
        <position position="69"/>
    </location>
    <ligand>
        <name>L-glutamine</name>
        <dbReference type="ChEBI" id="CHEBI:58359"/>
    </ligand>
</feature>
<feature type="binding site" evidence="1">
    <location>
        <position position="214"/>
    </location>
    <ligand>
        <name>L-glutamine</name>
        <dbReference type="ChEBI" id="CHEBI:58359"/>
    </ligand>
</feature>
<feature type="binding site" evidence="1">
    <location>
        <position position="233"/>
    </location>
    <ligand>
        <name>ATP</name>
        <dbReference type="ChEBI" id="CHEBI:30616"/>
    </ligand>
</feature>
<feature type="binding site" evidence="1">
    <location>
        <begin position="263"/>
        <end position="264"/>
    </location>
    <ligand>
        <name>ATP</name>
        <dbReference type="ChEBI" id="CHEBI:30616"/>
    </ligand>
</feature>
<feature type="binding site" evidence="1">
    <location>
        <begin position="271"/>
        <end position="273"/>
    </location>
    <ligand>
        <name>ATP</name>
        <dbReference type="ChEBI" id="CHEBI:30616"/>
    </ligand>
</feature>
<keyword id="KW-0030">Aminoacyl-tRNA synthetase</keyword>
<keyword id="KW-0067">ATP-binding</keyword>
<keyword id="KW-0963">Cytoplasm</keyword>
<keyword id="KW-0436">Ligase</keyword>
<keyword id="KW-0547">Nucleotide-binding</keyword>
<keyword id="KW-0648">Protein biosynthesis</keyword>
<keyword id="KW-1185">Reference proteome</keyword>
<comment type="catalytic activity">
    <reaction evidence="1">
        <text>tRNA(Gln) + L-glutamine + ATP = L-glutaminyl-tRNA(Gln) + AMP + diphosphate</text>
        <dbReference type="Rhea" id="RHEA:20121"/>
        <dbReference type="Rhea" id="RHEA-COMP:9662"/>
        <dbReference type="Rhea" id="RHEA-COMP:9681"/>
        <dbReference type="ChEBI" id="CHEBI:30616"/>
        <dbReference type="ChEBI" id="CHEBI:33019"/>
        <dbReference type="ChEBI" id="CHEBI:58359"/>
        <dbReference type="ChEBI" id="CHEBI:78442"/>
        <dbReference type="ChEBI" id="CHEBI:78521"/>
        <dbReference type="ChEBI" id="CHEBI:456215"/>
        <dbReference type="EC" id="6.1.1.18"/>
    </reaction>
</comment>
<comment type="subunit">
    <text evidence="1">Monomer.</text>
</comment>
<comment type="subcellular location">
    <subcellularLocation>
        <location evidence="1">Cytoplasm</location>
    </subcellularLocation>
</comment>
<comment type="similarity">
    <text evidence="1">Belongs to the class-I aminoacyl-tRNA synthetase family.</text>
</comment>
<organism>
    <name type="scientific">Bradyrhizobium diazoefficiens (strain JCM 10833 / BCRC 13528 / IAM 13628 / NBRC 14792 / USDA 110)</name>
    <dbReference type="NCBI Taxonomy" id="224911"/>
    <lineage>
        <taxon>Bacteria</taxon>
        <taxon>Pseudomonadati</taxon>
        <taxon>Pseudomonadota</taxon>
        <taxon>Alphaproteobacteria</taxon>
        <taxon>Hyphomicrobiales</taxon>
        <taxon>Nitrobacteraceae</taxon>
        <taxon>Bradyrhizobium</taxon>
    </lineage>
</organism>
<reference key="1">
    <citation type="journal article" date="2002" name="DNA Res.">
        <title>Complete genomic sequence of nitrogen-fixing symbiotic bacterium Bradyrhizobium japonicum USDA110.</title>
        <authorList>
            <person name="Kaneko T."/>
            <person name="Nakamura Y."/>
            <person name="Sato S."/>
            <person name="Minamisawa K."/>
            <person name="Uchiumi T."/>
            <person name="Sasamoto S."/>
            <person name="Watanabe A."/>
            <person name="Idesawa K."/>
            <person name="Iriguchi M."/>
            <person name="Kawashima K."/>
            <person name="Kohara M."/>
            <person name="Matsumoto M."/>
            <person name="Shimpo S."/>
            <person name="Tsuruoka H."/>
            <person name="Wada T."/>
            <person name="Yamada M."/>
            <person name="Tabata S."/>
        </authorList>
    </citation>
    <scope>NUCLEOTIDE SEQUENCE [LARGE SCALE GENOMIC DNA]</scope>
    <source>
        <strain>JCM 10833 / BCRC 13528 / IAM 13628 / NBRC 14792 / USDA 110</strain>
    </source>
</reference>